<dbReference type="EMBL" id="AABR07029862">
    <property type="status" value="NOT_ANNOTATED_CDS"/>
    <property type="molecule type" value="Genomic_DNA"/>
</dbReference>
<dbReference type="RefSeq" id="NP_001291281.1">
    <property type="nucleotide sequence ID" value="NM_001304352.1"/>
</dbReference>
<dbReference type="RefSeq" id="XP_006246906.1">
    <property type="nucleotide sequence ID" value="XM_006246844.4"/>
</dbReference>
<dbReference type="RefSeq" id="XP_017452580.1">
    <property type="nucleotide sequence ID" value="XM_017597091.1"/>
</dbReference>
<dbReference type="RefSeq" id="XP_038941387.1">
    <property type="nucleotide sequence ID" value="XM_039085459.2"/>
</dbReference>
<dbReference type="SMR" id="D4A8X0"/>
<dbReference type="FunCoup" id="D4A8X0">
    <property type="interactions" value="2498"/>
</dbReference>
<dbReference type="STRING" id="10116.ENSRNOP00000019687"/>
<dbReference type="GlyGen" id="D4A8X0">
    <property type="glycosylation" value="3 sites"/>
</dbReference>
<dbReference type="PhosphoSitePlus" id="D4A8X0"/>
<dbReference type="PaxDb" id="10116-ENSRNOP00000019687"/>
<dbReference type="Ensembl" id="ENSRNOT00000019687.7">
    <property type="protein sequence ID" value="ENSRNOP00000019687.4"/>
    <property type="gene ID" value="ENSRNOG00000014689.8"/>
</dbReference>
<dbReference type="GeneID" id="287441"/>
<dbReference type="KEGG" id="rno:287441"/>
<dbReference type="UCSC" id="RGD:1307184">
    <property type="organism name" value="rat"/>
</dbReference>
<dbReference type="AGR" id="RGD:1307184"/>
<dbReference type="CTD" id="57659"/>
<dbReference type="RGD" id="1307184">
    <property type="gene designation" value="Zbtb4"/>
</dbReference>
<dbReference type="eggNOG" id="KOG1721">
    <property type="taxonomic scope" value="Eukaryota"/>
</dbReference>
<dbReference type="GeneTree" id="ENSGT00940000161268"/>
<dbReference type="HOGENOM" id="CLU_007011_1_0_1"/>
<dbReference type="InParanoid" id="D4A8X0"/>
<dbReference type="OMA" id="VIAFAHP"/>
<dbReference type="OrthoDB" id="8922241at2759"/>
<dbReference type="PhylomeDB" id="D4A8X0"/>
<dbReference type="TreeFam" id="TF333100"/>
<dbReference type="PRO" id="PR:D4A8X0"/>
<dbReference type="Proteomes" id="UP000002494">
    <property type="component" value="Chromosome 10"/>
</dbReference>
<dbReference type="Bgee" id="ENSRNOG00000014689">
    <property type="expression patterns" value="Expressed in frontal cortex and 18 other cell types or tissues"/>
</dbReference>
<dbReference type="GO" id="GO:0005694">
    <property type="term" value="C:chromosome"/>
    <property type="evidence" value="ECO:0007669"/>
    <property type="project" value="UniProtKB-SubCell"/>
</dbReference>
<dbReference type="GO" id="GO:0005634">
    <property type="term" value="C:nucleus"/>
    <property type="evidence" value="ECO:0000266"/>
    <property type="project" value="RGD"/>
</dbReference>
<dbReference type="GO" id="GO:0000981">
    <property type="term" value="F:DNA-binding transcription factor activity, RNA polymerase II-specific"/>
    <property type="evidence" value="ECO:0000318"/>
    <property type="project" value="GO_Central"/>
</dbReference>
<dbReference type="GO" id="GO:0001227">
    <property type="term" value="F:DNA-binding transcription repressor activity, RNA polymerase II-specific"/>
    <property type="evidence" value="ECO:0000266"/>
    <property type="project" value="RGD"/>
</dbReference>
<dbReference type="GO" id="GO:0008327">
    <property type="term" value="F:methyl-CpG binding"/>
    <property type="evidence" value="ECO:0000266"/>
    <property type="project" value="RGD"/>
</dbReference>
<dbReference type="GO" id="GO:0010428">
    <property type="term" value="F:methyl-CpNpG binding"/>
    <property type="evidence" value="ECO:0000266"/>
    <property type="project" value="RGD"/>
</dbReference>
<dbReference type="GO" id="GO:0042803">
    <property type="term" value="F:protein homodimerization activity"/>
    <property type="evidence" value="ECO:0000266"/>
    <property type="project" value="RGD"/>
</dbReference>
<dbReference type="GO" id="GO:0019901">
    <property type="term" value="F:protein kinase binding"/>
    <property type="evidence" value="ECO:0000266"/>
    <property type="project" value="RGD"/>
</dbReference>
<dbReference type="GO" id="GO:0000978">
    <property type="term" value="F:RNA polymerase II cis-regulatory region sequence-specific DNA binding"/>
    <property type="evidence" value="ECO:0000318"/>
    <property type="project" value="GO_Central"/>
</dbReference>
<dbReference type="GO" id="GO:0000977">
    <property type="term" value="F:RNA polymerase II transcription regulatory region sequence-specific DNA binding"/>
    <property type="evidence" value="ECO:0000266"/>
    <property type="project" value="RGD"/>
</dbReference>
<dbReference type="GO" id="GO:0043565">
    <property type="term" value="F:sequence-specific DNA binding"/>
    <property type="evidence" value="ECO:0000266"/>
    <property type="project" value="RGD"/>
</dbReference>
<dbReference type="GO" id="GO:0008270">
    <property type="term" value="F:zinc ion binding"/>
    <property type="evidence" value="ECO:0007669"/>
    <property type="project" value="UniProtKB-KW"/>
</dbReference>
<dbReference type="GO" id="GO:0006974">
    <property type="term" value="P:DNA damage response"/>
    <property type="evidence" value="ECO:0000266"/>
    <property type="project" value="RGD"/>
</dbReference>
<dbReference type="GO" id="GO:0045892">
    <property type="term" value="P:negative regulation of DNA-templated transcription"/>
    <property type="evidence" value="ECO:0000266"/>
    <property type="project" value="RGD"/>
</dbReference>
<dbReference type="GO" id="GO:0000122">
    <property type="term" value="P:negative regulation of transcription by RNA polymerase II"/>
    <property type="evidence" value="ECO:0000266"/>
    <property type="project" value="RGD"/>
</dbReference>
<dbReference type="GO" id="GO:0006355">
    <property type="term" value="P:regulation of DNA-templated transcription"/>
    <property type="evidence" value="ECO:0000318"/>
    <property type="project" value="GO_Central"/>
</dbReference>
<dbReference type="CDD" id="cd18195">
    <property type="entry name" value="BTB_POZ_ZBTB4"/>
    <property type="match status" value="1"/>
</dbReference>
<dbReference type="FunFam" id="3.30.160.60:FF:000235">
    <property type="entry name" value="Zinc finger and BTB domain containing 38"/>
    <property type="match status" value="1"/>
</dbReference>
<dbReference type="FunFam" id="3.30.160.60:FF:000437">
    <property type="entry name" value="zinc finger and BTB domain-containing protein 38"/>
    <property type="match status" value="1"/>
</dbReference>
<dbReference type="FunFam" id="3.30.710.10:FF:000117">
    <property type="entry name" value="zinc finger and BTB domain-containing protein 4"/>
    <property type="match status" value="1"/>
</dbReference>
<dbReference type="Gene3D" id="3.30.160.60">
    <property type="entry name" value="Classic Zinc Finger"/>
    <property type="match status" value="4"/>
</dbReference>
<dbReference type="Gene3D" id="3.30.710.10">
    <property type="entry name" value="Potassium Channel Kv1.1, Chain A"/>
    <property type="match status" value="1"/>
</dbReference>
<dbReference type="InterPro" id="IPR000210">
    <property type="entry name" value="BTB/POZ_dom"/>
</dbReference>
<dbReference type="InterPro" id="IPR011333">
    <property type="entry name" value="SKP1/BTB/POZ_sf"/>
</dbReference>
<dbReference type="InterPro" id="IPR036236">
    <property type="entry name" value="Znf_C2H2_sf"/>
</dbReference>
<dbReference type="InterPro" id="IPR013087">
    <property type="entry name" value="Znf_C2H2_type"/>
</dbReference>
<dbReference type="InterPro" id="IPR050457">
    <property type="entry name" value="ZnFinger_BTB_dom_contain"/>
</dbReference>
<dbReference type="PANTHER" id="PTHR46105">
    <property type="entry name" value="AGAP004733-PA"/>
    <property type="match status" value="1"/>
</dbReference>
<dbReference type="PANTHER" id="PTHR46105:SF27">
    <property type="entry name" value="TRANSCRIPTIONAL REGULATOR KAISO"/>
    <property type="match status" value="1"/>
</dbReference>
<dbReference type="Pfam" id="PF00651">
    <property type="entry name" value="BTB"/>
    <property type="match status" value="1"/>
</dbReference>
<dbReference type="Pfam" id="PF00096">
    <property type="entry name" value="zf-C2H2"/>
    <property type="match status" value="2"/>
</dbReference>
<dbReference type="SMART" id="SM00225">
    <property type="entry name" value="BTB"/>
    <property type="match status" value="1"/>
</dbReference>
<dbReference type="SMART" id="SM00355">
    <property type="entry name" value="ZnF_C2H2"/>
    <property type="match status" value="6"/>
</dbReference>
<dbReference type="SUPFAM" id="SSF57667">
    <property type="entry name" value="beta-beta-alpha zinc fingers"/>
    <property type="match status" value="2"/>
</dbReference>
<dbReference type="SUPFAM" id="SSF54695">
    <property type="entry name" value="POZ domain"/>
    <property type="match status" value="1"/>
</dbReference>
<dbReference type="PROSITE" id="PS50097">
    <property type="entry name" value="BTB"/>
    <property type="match status" value="1"/>
</dbReference>
<dbReference type="PROSITE" id="PS00028">
    <property type="entry name" value="ZINC_FINGER_C2H2_1"/>
    <property type="match status" value="5"/>
</dbReference>
<dbReference type="PROSITE" id="PS50157">
    <property type="entry name" value="ZINC_FINGER_C2H2_2"/>
    <property type="match status" value="6"/>
</dbReference>
<name>ZBTB4_RAT</name>
<feature type="chain" id="PRO_0000434409" description="Zinc finger and BTB domain-containing protein 4">
    <location>
        <begin position="1"/>
        <end position="984"/>
    </location>
</feature>
<feature type="domain" description="BTB" evidence="3">
    <location>
        <begin position="30"/>
        <end position="131"/>
    </location>
</feature>
<feature type="zinc finger region" description="C2H2-type 1; atypical" evidence="4">
    <location>
        <begin position="210"/>
        <end position="232"/>
    </location>
</feature>
<feature type="zinc finger region" description="C2H2-type 2" evidence="4">
    <location>
        <begin position="285"/>
        <end position="307"/>
    </location>
</feature>
<feature type="zinc finger region" description="C2H2-type 3" evidence="4">
    <location>
        <begin position="313"/>
        <end position="335"/>
    </location>
</feature>
<feature type="zinc finger region" description="C2H2-type 4" evidence="4">
    <location>
        <begin position="341"/>
        <end position="364"/>
    </location>
</feature>
<feature type="zinc finger region" description="C2H2-type 5" evidence="4">
    <location>
        <begin position="697"/>
        <end position="719"/>
    </location>
</feature>
<feature type="zinc finger region" description="C2H2-type 6" evidence="4">
    <location>
        <begin position="736"/>
        <end position="758"/>
    </location>
</feature>
<feature type="region of interest" description="Disordered" evidence="5">
    <location>
        <begin position="71"/>
        <end position="104"/>
    </location>
</feature>
<feature type="region of interest" description="Interaction with CBFA2T3" evidence="2">
    <location>
        <begin position="165"/>
        <end position="324"/>
    </location>
</feature>
<feature type="region of interest" description="Disordered" evidence="5">
    <location>
        <begin position="172"/>
        <end position="210"/>
    </location>
</feature>
<feature type="region of interest" description="Disordered" evidence="5">
    <location>
        <begin position="227"/>
        <end position="262"/>
    </location>
</feature>
<feature type="region of interest" description="Disordered" evidence="5">
    <location>
        <begin position="461"/>
        <end position="575"/>
    </location>
</feature>
<feature type="region of interest" description="Disordered" evidence="5">
    <location>
        <begin position="593"/>
        <end position="696"/>
    </location>
</feature>
<feature type="region of interest" description="Disordered" evidence="5">
    <location>
        <begin position="713"/>
        <end position="734"/>
    </location>
</feature>
<feature type="region of interest" description="Disordered" evidence="5">
    <location>
        <begin position="756"/>
        <end position="836"/>
    </location>
</feature>
<feature type="region of interest" description="Disordered" evidence="5">
    <location>
        <begin position="853"/>
        <end position="876"/>
    </location>
</feature>
<feature type="region of interest" description="Disordered" evidence="5">
    <location>
        <begin position="947"/>
        <end position="984"/>
    </location>
</feature>
<feature type="compositionally biased region" description="Low complexity" evidence="5">
    <location>
        <begin position="74"/>
        <end position="88"/>
    </location>
</feature>
<feature type="compositionally biased region" description="Gly residues" evidence="5">
    <location>
        <begin position="242"/>
        <end position="255"/>
    </location>
</feature>
<feature type="compositionally biased region" description="Gly residues" evidence="5">
    <location>
        <begin position="467"/>
        <end position="477"/>
    </location>
</feature>
<feature type="compositionally biased region" description="Low complexity" evidence="5">
    <location>
        <begin position="478"/>
        <end position="488"/>
    </location>
</feature>
<feature type="compositionally biased region" description="Low complexity" evidence="5">
    <location>
        <begin position="507"/>
        <end position="529"/>
    </location>
</feature>
<feature type="compositionally biased region" description="Gly residues" evidence="5">
    <location>
        <begin position="552"/>
        <end position="565"/>
    </location>
</feature>
<feature type="compositionally biased region" description="Acidic residues" evidence="5">
    <location>
        <begin position="604"/>
        <end position="627"/>
    </location>
</feature>
<feature type="compositionally biased region" description="Basic and acidic residues" evidence="5">
    <location>
        <begin position="628"/>
        <end position="637"/>
    </location>
</feature>
<feature type="compositionally biased region" description="Low complexity" evidence="5">
    <location>
        <begin position="807"/>
        <end position="819"/>
    </location>
</feature>
<feature type="compositionally biased region" description="Pro residues" evidence="5">
    <location>
        <begin position="948"/>
        <end position="966"/>
    </location>
</feature>
<feature type="modified residue" description="Phosphoserine" evidence="2">
    <location>
        <position position="367"/>
    </location>
</feature>
<feature type="modified residue" description="Phosphothreonine; by HIPK2" evidence="2">
    <location>
        <position position="766"/>
    </location>
</feature>
<feature type="modified residue" description="Phosphothreonine; by HIPK2" evidence="2">
    <location>
        <position position="768"/>
    </location>
</feature>
<feature type="modified residue" description="Phosphothreonine; by HIPK2" evidence="2">
    <location>
        <position position="955"/>
    </location>
</feature>
<feature type="cross-link" description="Glycyl lysine isopeptide (Lys-Gly) (interchain with G-Cter in SUMO2)" evidence="2">
    <location>
        <position position="40"/>
    </location>
</feature>
<feature type="cross-link" description="Glycyl lysine isopeptide (Lys-Gly) (interchain with G-Cter in SUMO2)" evidence="2">
    <location>
        <position position="548"/>
    </location>
</feature>
<feature type="cross-link" description="Glycyl lysine isopeptide (Lys-Gly) (interchain with G-Cter in SUMO2)" evidence="2">
    <location>
        <position position="590"/>
    </location>
</feature>
<gene>
    <name type="primary">Zbtb4</name>
</gene>
<accession>D4A8X0</accession>
<comment type="function">
    <text evidence="1 2">Transcriptional repressor with bimodal DNA-binding specificity. Represses transcription in a methyl-CpG-dependent manner. Binds with a higher affinity to methylated CpG dinucleotides in the consensus sequence 5'-CGCG-3' but can also bind to the non-methylated consensus sequence 5'-CTGCNA-3' also known as the consensus kaiso binding site (KBS). Can also bind specifically to a single methyl-CpG pair and can bind hemimethylated DNA but with a lower affinity compared to methylated DNA. Plays a role in postnatal myogenesis, may be involved in the regulation of satellite cells self-renewal (By similarity).</text>
</comment>
<comment type="subunit">
    <text evidence="2">Interacts with HIPK2. Interacts with CBFA2T3. Interacts with ZBTB38.</text>
</comment>
<comment type="subcellular location">
    <subcellularLocation>
        <location evidence="2">Nucleus</location>
    </subcellularLocation>
    <subcellularLocation>
        <location evidence="2">Chromosome</location>
    </subcellularLocation>
    <text evidence="2">Localizes to chromocenters.</text>
</comment>
<comment type="PTM">
    <text evidence="2">Phosphorylated by HIPK2. This phosphorylation reduces stability and triggers ZBTB4 protein degradation in response to DNA damage.</text>
</comment>
<reference key="1">
    <citation type="journal article" date="2004" name="Nature">
        <title>Genome sequence of the Brown Norway rat yields insights into mammalian evolution.</title>
        <authorList>
            <person name="Gibbs R.A."/>
            <person name="Weinstock G.M."/>
            <person name="Metzker M.L."/>
            <person name="Muzny D.M."/>
            <person name="Sodergren E.J."/>
            <person name="Scherer S."/>
            <person name="Scott G."/>
            <person name="Steffen D."/>
            <person name="Worley K.C."/>
            <person name="Burch P.E."/>
            <person name="Okwuonu G."/>
            <person name="Hines S."/>
            <person name="Lewis L."/>
            <person name="Deramo C."/>
            <person name="Delgado O."/>
            <person name="Dugan-Rocha S."/>
            <person name="Miner G."/>
            <person name="Morgan M."/>
            <person name="Hawes A."/>
            <person name="Gill R."/>
            <person name="Holt R.A."/>
            <person name="Adams M.D."/>
            <person name="Amanatides P.G."/>
            <person name="Baden-Tillson H."/>
            <person name="Barnstead M."/>
            <person name="Chin S."/>
            <person name="Evans C.A."/>
            <person name="Ferriera S."/>
            <person name="Fosler C."/>
            <person name="Glodek A."/>
            <person name="Gu Z."/>
            <person name="Jennings D."/>
            <person name="Kraft C.L."/>
            <person name="Nguyen T."/>
            <person name="Pfannkoch C.M."/>
            <person name="Sitter C."/>
            <person name="Sutton G.G."/>
            <person name="Venter J.C."/>
            <person name="Woodage T."/>
            <person name="Smith D."/>
            <person name="Lee H.-M."/>
            <person name="Gustafson E."/>
            <person name="Cahill P."/>
            <person name="Kana A."/>
            <person name="Doucette-Stamm L."/>
            <person name="Weinstock K."/>
            <person name="Fechtel K."/>
            <person name="Weiss R.B."/>
            <person name="Dunn D.M."/>
            <person name="Green E.D."/>
            <person name="Blakesley R.W."/>
            <person name="Bouffard G.G."/>
            <person name="De Jong P.J."/>
            <person name="Osoegawa K."/>
            <person name="Zhu B."/>
            <person name="Marra M."/>
            <person name="Schein J."/>
            <person name="Bosdet I."/>
            <person name="Fjell C."/>
            <person name="Jones S."/>
            <person name="Krzywinski M."/>
            <person name="Mathewson C."/>
            <person name="Siddiqui A."/>
            <person name="Wye N."/>
            <person name="McPherson J."/>
            <person name="Zhao S."/>
            <person name="Fraser C.M."/>
            <person name="Shetty J."/>
            <person name="Shatsman S."/>
            <person name="Geer K."/>
            <person name="Chen Y."/>
            <person name="Abramzon S."/>
            <person name="Nierman W.C."/>
            <person name="Havlak P.H."/>
            <person name="Chen R."/>
            <person name="Durbin K.J."/>
            <person name="Egan A."/>
            <person name="Ren Y."/>
            <person name="Song X.-Z."/>
            <person name="Li B."/>
            <person name="Liu Y."/>
            <person name="Qin X."/>
            <person name="Cawley S."/>
            <person name="Cooney A.J."/>
            <person name="D'Souza L.M."/>
            <person name="Martin K."/>
            <person name="Wu J.Q."/>
            <person name="Gonzalez-Garay M.L."/>
            <person name="Jackson A.R."/>
            <person name="Kalafus K.J."/>
            <person name="McLeod M.P."/>
            <person name="Milosavljevic A."/>
            <person name="Virk D."/>
            <person name="Volkov A."/>
            <person name="Wheeler D.A."/>
            <person name="Zhang Z."/>
            <person name="Bailey J.A."/>
            <person name="Eichler E.E."/>
            <person name="Tuzun E."/>
            <person name="Birney E."/>
            <person name="Mongin E."/>
            <person name="Ureta-Vidal A."/>
            <person name="Woodwark C."/>
            <person name="Zdobnov E."/>
            <person name="Bork P."/>
            <person name="Suyama M."/>
            <person name="Torrents D."/>
            <person name="Alexandersson M."/>
            <person name="Trask B.J."/>
            <person name="Young J.M."/>
            <person name="Huang H."/>
            <person name="Wang H."/>
            <person name="Xing H."/>
            <person name="Daniels S."/>
            <person name="Gietzen D."/>
            <person name="Schmidt J."/>
            <person name="Stevens K."/>
            <person name="Vitt U."/>
            <person name="Wingrove J."/>
            <person name="Camara F."/>
            <person name="Mar Alba M."/>
            <person name="Abril J.F."/>
            <person name="Guigo R."/>
            <person name="Smit A."/>
            <person name="Dubchak I."/>
            <person name="Rubin E.M."/>
            <person name="Couronne O."/>
            <person name="Poliakov A."/>
            <person name="Huebner N."/>
            <person name="Ganten D."/>
            <person name="Goesele C."/>
            <person name="Hummel O."/>
            <person name="Kreitler T."/>
            <person name="Lee Y.-A."/>
            <person name="Monti J."/>
            <person name="Schulz H."/>
            <person name="Zimdahl H."/>
            <person name="Himmelbauer H."/>
            <person name="Lehrach H."/>
            <person name="Jacob H.J."/>
            <person name="Bromberg S."/>
            <person name="Gullings-Handley J."/>
            <person name="Jensen-Seaman M.I."/>
            <person name="Kwitek A.E."/>
            <person name="Lazar J."/>
            <person name="Pasko D."/>
            <person name="Tonellato P.J."/>
            <person name="Twigger S."/>
            <person name="Ponting C.P."/>
            <person name="Duarte J.M."/>
            <person name="Rice S."/>
            <person name="Goodstadt L."/>
            <person name="Beatson S.A."/>
            <person name="Emes R.D."/>
            <person name="Winter E.E."/>
            <person name="Webber C."/>
            <person name="Brandt P."/>
            <person name="Nyakatura G."/>
            <person name="Adetobi M."/>
            <person name="Chiaromonte F."/>
            <person name="Elnitski L."/>
            <person name="Eswara P."/>
            <person name="Hardison R.C."/>
            <person name="Hou M."/>
            <person name="Kolbe D."/>
            <person name="Makova K."/>
            <person name="Miller W."/>
            <person name="Nekrutenko A."/>
            <person name="Riemer C."/>
            <person name="Schwartz S."/>
            <person name="Taylor J."/>
            <person name="Yang S."/>
            <person name="Zhang Y."/>
            <person name="Lindpaintner K."/>
            <person name="Andrews T.D."/>
            <person name="Caccamo M."/>
            <person name="Clamp M."/>
            <person name="Clarke L."/>
            <person name="Curwen V."/>
            <person name="Durbin R.M."/>
            <person name="Eyras E."/>
            <person name="Searle S.M."/>
            <person name="Cooper G.M."/>
            <person name="Batzoglou S."/>
            <person name="Brudno M."/>
            <person name="Sidow A."/>
            <person name="Stone E.A."/>
            <person name="Payseur B.A."/>
            <person name="Bourque G."/>
            <person name="Lopez-Otin C."/>
            <person name="Puente X.S."/>
            <person name="Chakrabarti K."/>
            <person name="Chatterji S."/>
            <person name="Dewey C."/>
            <person name="Pachter L."/>
            <person name="Bray N."/>
            <person name="Yap V.B."/>
            <person name="Caspi A."/>
            <person name="Tesler G."/>
            <person name="Pevzner P.A."/>
            <person name="Haussler D."/>
            <person name="Roskin K.M."/>
            <person name="Baertsch R."/>
            <person name="Clawson H."/>
            <person name="Furey T.S."/>
            <person name="Hinrichs A.S."/>
            <person name="Karolchik D."/>
            <person name="Kent W.J."/>
            <person name="Rosenbloom K.R."/>
            <person name="Trumbower H."/>
            <person name="Weirauch M."/>
            <person name="Cooper D.N."/>
            <person name="Stenson P.D."/>
            <person name="Ma B."/>
            <person name="Brent M."/>
            <person name="Arumugam M."/>
            <person name="Shteynberg D."/>
            <person name="Copley R.R."/>
            <person name="Taylor M.S."/>
            <person name="Riethman H."/>
            <person name="Mudunuri U."/>
            <person name="Peterson J."/>
            <person name="Guyer M."/>
            <person name="Felsenfeld A."/>
            <person name="Old S."/>
            <person name="Mockrin S."/>
            <person name="Collins F.S."/>
        </authorList>
    </citation>
    <scope>NUCLEOTIDE SEQUENCE [LARGE SCALE GENOMIC DNA]</scope>
    <source>
        <strain>Brown Norway</strain>
    </source>
</reference>
<reference key="2">
    <citation type="journal article" date="2012" name="Nat. Commun.">
        <title>Quantitative maps of protein phosphorylation sites across 14 different rat organs and tissues.</title>
        <authorList>
            <person name="Lundby A."/>
            <person name="Secher A."/>
            <person name="Lage K."/>
            <person name="Nordsborg N.B."/>
            <person name="Dmytriyev A."/>
            <person name="Lundby C."/>
            <person name="Olsen J.V."/>
        </authorList>
    </citation>
    <scope>IDENTIFICATION BY MASS SPECTROMETRY [LARGE SCALE ANALYSIS]</scope>
</reference>
<keyword id="KW-0158">Chromosome</keyword>
<keyword id="KW-0175">Coiled coil</keyword>
<keyword id="KW-0238">DNA-binding</keyword>
<keyword id="KW-1017">Isopeptide bond</keyword>
<keyword id="KW-0479">Metal-binding</keyword>
<keyword id="KW-0539">Nucleus</keyword>
<keyword id="KW-0597">Phosphoprotein</keyword>
<keyword id="KW-1185">Reference proteome</keyword>
<keyword id="KW-0677">Repeat</keyword>
<keyword id="KW-0678">Repressor</keyword>
<keyword id="KW-0804">Transcription</keyword>
<keyword id="KW-0805">Transcription regulation</keyword>
<keyword id="KW-0832">Ubl conjugation</keyword>
<keyword id="KW-0862">Zinc</keyword>
<keyword id="KW-0863">Zinc-finger</keyword>
<protein>
    <recommendedName>
        <fullName>Zinc finger and BTB domain-containing protein 4</fullName>
    </recommendedName>
</protein>
<proteinExistence type="evidence at protein level"/>
<evidence type="ECO:0000250" key="1">
    <source>
        <dbReference type="UniProtKB" id="Q5F293"/>
    </source>
</evidence>
<evidence type="ECO:0000250" key="2">
    <source>
        <dbReference type="UniProtKB" id="Q9P1Z0"/>
    </source>
</evidence>
<evidence type="ECO:0000255" key="3">
    <source>
        <dbReference type="PROSITE-ProRule" id="PRU00037"/>
    </source>
</evidence>
<evidence type="ECO:0000255" key="4">
    <source>
        <dbReference type="PROSITE-ProRule" id="PRU00042"/>
    </source>
</evidence>
<evidence type="ECO:0000256" key="5">
    <source>
        <dbReference type="SAM" id="MobiDB-lite"/>
    </source>
</evidence>
<organism>
    <name type="scientific">Rattus norvegicus</name>
    <name type="common">Rat</name>
    <dbReference type="NCBI Taxonomy" id="10116"/>
    <lineage>
        <taxon>Eukaryota</taxon>
        <taxon>Metazoa</taxon>
        <taxon>Chordata</taxon>
        <taxon>Craniata</taxon>
        <taxon>Vertebrata</taxon>
        <taxon>Euteleostomi</taxon>
        <taxon>Mammalia</taxon>
        <taxon>Eutheria</taxon>
        <taxon>Euarchontoglires</taxon>
        <taxon>Glires</taxon>
        <taxon>Rodentia</taxon>
        <taxon>Myomorpha</taxon>
        <taxon>Muroidea</taxon>
        <taxon>Muridae</taxon>
        <taxon>Murinae</taxon>
        <taxon>Rattus</taxon>
    </lineage>
</organism>
<sequence>MPPPAEVTDPSHAPAVLRQLNEQRLRGLFCDVTLIAGDTKFPAHRSVLAASSPFFREALLASAPLPLPPVTGGSAPSPATTTAASSSSSPPPPASPHSSSPPRVLELPGVPAAAFSDVLNFIYSARLALPGGGGDGAAVAEIGALGRRLGISRLQGLGEGGDTWVPPAPSSMVTSEPNEDSLGPGLRTDGGWEGDKAEPLTPDSQPRRPFPCPRCGKSFIHPKRLQTHEAQCRRGSNTRGSAGLGPGGSGPGGPAGVDASALPQPVSFRDGPEHVVKVVGGHVLYVCAACERSYVTLSSLKRHSNVHSWRRKYPCRYCEKVFALAEYRTKHEVWHTGERRYQCIFCWETFVTYYNLKTHQRAFHGISPGLLASEKTPNGGYKPKLNTLKLYRLLPMRAAKRPYKTYSQGAPEAPLSPSLHTPVPAVMPASPQPLLPSVPEPGPPHSVITFAHPAPSVIVHGSSSSGAAGGGPVGTGGSQAASVITYTTPPRPPKKREYPPPPPEPAATPTSPASTAVIPATAAGPATATEEAKGRNLRAGRTLTYTAKPVGGVSGSGGSPTGTGRGSSQLQAPPPLCQITVRIGEEAIVKRRISETDLRPGELSGEEVEESEEEEEEEEEEDQEDQEESKAGGEDQLWRPYYSYKPKRKAGATASGLSGLPRGRRPPRWRQKLERRGWEETPAVEGPGGRGRGERRHRCGDCAQAFATLRKLRKHQEAHSGGSHNSRTGRRSSTRFTCPHCAKVCKTAAALNRHGQRHAVERPGGTPTPVIAYSKGSIGTRPTDVKEEAPQEMQVSSSSGEAGGGSAAAAAAEASESASLQDPVISGGEEPPVAGGGGYVYPPVQEFPLALIGGSRDPGAGKGKPGNEGPVGASEGNRMEEMGTAKVTFYPEPYPLVYGPQLLAAYPYNFSNLAALPVALNMVLPDEKGGGALPFLPGVFGYAVNPQTAPPTPPTPPPPLPLPVPPKGVGEMTGVERTQKGDVG</sequence>